<name>YOR31_YEAST</name>
<comment type="subcellular location">
    <subcellularLocation>
        <location evidence="1">Cytoplasm</location>
    </subcellularLocation>
    <subcellularLocation>
        <location evidence="1">Nucleus</location>
    </subcellularLocation>
</comment>
<comment type="miscellaneous">
    <text evidence="2">Present with 396 molecules/cell in log phase SD medium.</text>
</comment>
<comment type="similarity">
    <text evidence="3">Belongs to the HAD-like hydrolase superfamily.</text>
</comment>
<sequence>MTKLQGLQGLKHIKAVVFDMDGTLCLPQPWMFPAMRNAIGLEDKSIDILHFIDTLPTEKEKKEAHDRIELVEAKAMKEMQPQPGLVDIMRYLTKNGISKNICTRNVGAPVETFVKRFIPSELSRFDYIVTREFRPTKPQPDPLLHIASKLNIRPLEMIMVGDSFDDMKSGRSAGCFTVLLKNHVNGHLLLEHKELVDVSVEDLSEIIELIQNMNKESF</sequence>
<keyword id="KW-0963">Cytoplasm</keyword>
<keyword id="KW-0378">Hydrolase</keyword>
<keyword id="KW-0539">Nucleus</keyword>
<keyword id="KW-1185">Reference proteome</keyword>
<feature type="chain" id="PRO_0000237658" description="Uncharacterized hydrolase YOR131C">
    <location>
        <begin position="1"/>
        <end position="218"/>
    </location>
</feature>
<accession>Q12486</accession>
<accession>D6W2I9</accession>
<protein>
    <recommendedName>
        <fullName>Uncharacterized hydrolase YOR131C</fullName>
        <ecNumber>3.-.-.-</ecNumber>
    </recommendedName>
</protein>
<evidence type="ECO:0000269" key="1">
    <source>
    </source>
</evidence>
<evidence type="ECO:0000269" key="2">
    <source>
    </source>
</evidence>
<evidence type="ECO:0000305" key="3"/>
<reference key="1">
    <citation type="journal article" date="1997" name="Yeast">
        <title>DNA sequencing and analysis of 130 kb from yeast chromosome XV.</title>
        <authorList>
            <person name="Voss H."/>
            <person name="Benes V."/>
            <person name="Andrade M.A."/>
            <person name="Valencia A."/>
            <person name="Rechmann S."/>
            <person name="Teodoru C."/>
            <person name="Schwager C."/>
            <person name="Paces V."/>
            <person name="Sander C."/>
            <person name="Ansorge W."/>
        </authorList>
    </citation>
    <scope>NUCLEOTIDE SEQUENCE [GENOMIC DNA]</scope>
    <source>
        <strain>ATCC 96604 / S288c / FY1679</strain>
    </source>
</reference>
<reference key="2">
    <citation type="journal article" date="1996" name="Yeast">
        <title>Sequencing and analysis of 51 kb on the right arm of chromosome XV from Saccharomyces cerevisiae reveals 30 open reading frames.</title>
        <authorList>
            <person name="Wiemann S."/>
            <person name="Rechmann S."/>
            <person name="Benes V."/>
            <person name="Voss H."/>
            <person name="Schwager C."/>
            <person name="Vlcek C."/>
            <person name="Stegemann J."/>
            <person name="Zimmermann J."/>
            <person name="Erfle H."/>
            <person name="Paces V."/>
            <person name="Ansorge W."/>
        </authorList>
    </citation>
    <scope>NUCLEOTIDE SEQUENCE [GENOMIC DNA]</scope>
    <source>
        <strain>ATCC 96604 / S288c / FY1679</strain>
    </source>
</reference>
<reference key="3">
    <citation type="journal article" date="1997" name="Nature">
        <title>The nucleotide sequence of Saccharomyces cerevisiae chromosome XV.</title>
        <authorList>
            <person name="Dujon B."/>
            <person name="Albermann K."/>
            <person name="Aldea M."/>
            <person name="Alexandraki D."/>
            <person name="Ansorge W."/>
            <person name="Arino J."/>
            <person name="Benes V."/>
            <person name="Bohn C."/>
            <person name="Bolotin-Fukuhara M."/>
            <person name="Bordonne R."/>
            <person name="Boyer J."/>
            <person name="Camasses A."/>
            <person name="Casamayor A."/>
            <person name="Casas C."/>
            <person name="Cheret G."/>
            <person name="Cziepluch C."/>
            <person name="Daignan-Fornier B."/>
            <person name="Dang V.-D."/>
            <person name="de Haan M."/>
            <person name="Delius H."/>
            <person name="Durand P."/>
            <person name="Fairhead C."/>
            <person name="Feldmann H."/>
            <person name="Gaillon L."/>
            <person name="Galisson F."/>
            <person name="Gamo F.-J."/>
            <person name="Gancedo C."/>
            <person name="Goffeau A."/>
            <person name="Goulding S.E."/>
            <person name="Grivell L.A."/>
            <person name="Habbig B."/>
            <person name="Hand N.J."/>
            <person name="Hani J."/>
            <person name="Hattenhorst U."/>
            <person name="Hebling U."/>
            <person name="Hernando Y."/>
            <person name="Herrero E."/>
            <person name="Heumann K."/>
            <person name="Hiesel R."/>
            <person name="Hilger F."/>
            <person name="Hofmann B."/>
            <person name="Hollenberg C.P."/>
            <person name="Hughes B."/>
            <person name="Jauniaux J.-C."/>
            <person name="Kalogeropoulos A."/>
            <person name="Katsoulou C."/>
            <person name="Kordes E."/>
            <person name="Lafuente M.J."/>
            <person name="Landt O."/>
            <person name="Louis E.J."/>
            <person name="Maarse A.C."/>
            <person name="Madania A."/>
            <person name="Mannhaupt G."/>
            <person name="Marck C."/>
            <person name="Martin R.P."/>
            <person name="Mewes H.-W."/>
            <person name="Michaux G."/>
            <person name="Paces V."/>
            <person name="Parle-McDermott A.G."/>
            <person name="Pearson B.M."/>
            <person name="Perrin A."/>
            <person name="Pettersson B."/>
            <person name="Poch O."/>
            <person name="Pohl T.M."/>
            <person name="Poirey R."/>
            <person name="Portetelle D."/>
            <person name="Pujol A."/>
            <person name="Purnelle B."/>
            <person name="Ramezani Rad M."/>
            <person name="Rechmann S."/>
            <person name="Schwager C."/>
            <person name="Schweizer M."/>
            <person name="Sor F."/>
            <person name="Sterky F."/>
            <person name="Tarassov I.A."/>
            <person name="Teodoru C."/>
            <person name="Tettelin H."/>
            <person name="Thierry A."/>
            <person name="Tobiasch E."/>
            <person name="Tzermia M."/>
            <person name="Uhlen M."/>
            <person name="Unseld M."/>
            <person name="Valens M."/>
            <person name="Vandenbol M."/>
            <person name="Vetter I."/>
            <person name="Vlcek C."/>
            <person name="Voet M."/>
            <person name="Volckaert G."/>
            <person name="Voss H."/>
            <person name="Wambutt R."/>
            <person name="Wedler H."/>
            <person name="Wiemann S."/>
            <person name="Winsor B."/>
            <person name="Wolfe K.H."/>
            <person name="Zollner A."/>
            <person name="Zumstein E."/>
            <person name="Kleine K."/>
        </authorList>
    </citation>
    <scope>NUCLEOTIDE SEQUENCE [LARGE SCALE GENOMIC DNA]</scope>
    <source>
        <strain>ATCC 204508 / S288c</strain>
    </source>
</reference>
<reference key="4">
    <citation type="journal article" date="2014" name="G3 (Bethesda)">
        <title>The reference genome sequence of Saccharomyces cerevisiae: Then and now.</title>
        <authorList>
            <person name="Engel S.R."/>
            <person name="Dietrich F.S."/>
            <person name="Fisk D.G."/>
            <person name="Binkley G."/>
            <person name="Balakrishnan R."/>
            <person name="Costanzo M.C."/>
            <person name="Dwight S.S."/>
            <person name="Hitz B.C."/>
            <person name="Karra K."/>
            <person name="Nash R.S."/>
            <person name="Weng S."/>
            <person name="Wong E.D."/>
            <person name="Lloyd P."/>
            <person name="Skrzypek M.S."/>
            <person name="Miyasato S.R."/>
            <person name="Simison M."/>
            <person name="Cherry J.M."/>
        </authorList>
    </citation>
    <scope>GENOME REANNOTATION</scope>
    <source>
        <strain>ATCC 204508 / S288c</strain>
    </source>
</reference>
<reference key="5">
    <citation type="journal article" date="2003" name="Nature">
        <title>Global analysis of protein localization in budding yeast.</title>
        <authorList>
            <person name="Huh W.-K."/>
            <person name="Falvo J.V."/>
            <person name="Gerke L.C."/>
            <person name="Carroll A.S."/>
            <person name="Howson R.W."/>
            <person name="Weissman J.S."/>
            <person name="O'Shea E.K."/>
        </authorList>
    </citation>
    <scope>SUBCELLULAR LOCATION [LARGE SCALE ANALYSIS]</scope>
</reference>
<reference key="6">
    <citation type="journal article" date="2003" name="Nature">
        <title>Global analysis of protein expression in yeast.</title>
        <authorList>
            <person name="Ghaemmaghami S."/>
            <person name="Huh W.-K."/>
            <person name="Bower K."/>
            <person name="Howson R.W."/>
            <person name="Belle A."/>
            <person name="Dephoure N."/>
            <person name="O'Shea E.K."/>
            <person name="Weissman J.S."/>
        </authorList>
    </citation>
    <scope>LEVEL OF PROTEIN EXPRESSION [LARGE SCALE ANALYSIS]</scope>
</reference>
<proteinExistence type="evidence at protein level"/>
<gene>
    <name type="ordered locus">YOR131C</name>
    <name type="ORF">O3311</name>
    <name type="ORF">YOR3311c</name>
</gene>
<dbReference type="EC" id="3.-.-.-"/>
<dbReference type="EMBL" id="X94335">
    <property type="protein sequence ID" value="CAA64050.1"/>
    <property type="molecule type" value="Genomic_DNA"/>
</dbReference>
<dbReference type="EMBL" id="X90518">
    <property type="protein sequence ID" value="CAA62117.1"/>
    <property type="molecule type" value="Genomic_DNA"/>
</dbReference>
<dbReference type="EMBL" id="Z75039">
    <property type="protein sequence ID" value="CAA99330.1"/>
    <property type="molecule type" value="Genomic_DNA"/>
</dbReference>
<dbReference type="EMBL" id="BK006948">
    <property type="protein sequence ID" value="DAA10905.1"/>
    <property type="molecule type" value="Genomic_DNA"/>
</dbReference>
<dbReference type="PIR" id="S60996">
    <property type="entry name" value="S60996"/>
</dbReference>
<dbReference type="RefSeq" id="NP_014774.1">
    <property type="nucleotide sequence ID" value="NM_001183550.1"/>
</dbReference>
<dbReference type="SMR" id="Q12486"/>
<dbReference type="BioGRID" id="34527">
    <property type="interactions" value="107"/>
</dbReference>
<dbReference type="DIP" id="DIP-4142N"/>
<dbReference type="FunCoup" id="Q12486">
    <property type="interactions" value="122"/>
</dbReference>
<dbReference type="IntAct" id="Q12486">
    <property type="interactions" value="4"/>
</dbReference>
<dbReference type="STRING" id="4932.YOR131C"/>
<dbReference type="iPTMnet" id="Q12486"/>
<dbReference type="PaxDb" id="4932-YOR131C"/>
<dbReference type="PeptideAtlas" id="Q12486"/>
<dbReference type="TopDownProteomics" id="Q12486"/>
<dbReference type="EnsemblFungi" id="YOR131C_mRNA">
    <property type="protein sequence ID" value="YOR131C"/>
    <property type="gene ID" value="YOR131C"/>
</dbReference>
<dbReference type="GeneID" id="854299"/>
<dbReference type="KEGG" id="sce:YOR131C"/>
<dbReference type="AGR" id="SGD:S000005657"/>
<dbReference type="SGD" id="S000005657">
    <property type="gene designation" value="YOR131C"/>
</dbReference>
<dbReference type="VEuPathDB" id="FungiDB:YOR131C"/>
<dbReference type="eggNOG" id="ENOG502QR7R">
    <property type="taxonomic scope" value="Eukaryota"/>
</dbReference>
<dbReference type="HOGENOM" id="CLU_045011_11_1_1"/>
<dbReference type="InParanoid" id="Q12486"/>
<dbReference type="OMA" id="QTYMFKE"/>
<dbReference type="OrthoDB" id="426235at2759"/>
<dbReference type="BioCyc" id="YEAST:G3O-33655-MONOMER"/>
<dbReference type="BioGRID-ORCS" id="854299">
    <property type="hits" value="0 hits in 10 CRISPR screens"/>
</dbReference>
<dbReference type="PRO" id="PR:Q12486"/>
<dbReference type="Proteomes" id="UP000002311">
    <property type="component" value="Chromosome XV"/>
</dbReference>
<dbReference type="RNAct" id="Q12486">
    <property type="molecule type" value="protein"/>
</dbReference>
<dbReference type="GO" id="GO:0005737">
    <property type="term" value="C:cytoplasm"/>
    <property type="evidence" value="ECO:0007005"/>
    <property type="project" value="SGD"/>
</dbReference>
<dbReference type="GO" id="GO:0005634">
    <property type="term" value="C:nucleus"/>
    <property type="evidence" value="ECO:0007005"/>
    <property type="project" value="SGD"/>
</dbReference>
<dbReference type="GO" id="GO:0033883">
    <property type="term" value="F:pyridoxal phosphatase activity"/>
    <property type="evidence" value="ECO:0000314"/>
    <property type="project" value="SGD"/>
</dbReference>
<dbReference type="CDD" id="cd07505">
    <property type="entry name" value="HAD_BPGM-like"/>
    <property type="match status" value="1"/>
</dbReference>
<dbReference type="Gene3D" id="1.10.260.80">
    <property type="match status" value="1"/>
</dbReference>
<dbReference type="Gene3D" id="3.40.50.1000">
    <property type="entry name" value="HAD superfamily/HAD-like"/>
    <property type="match status" value="1"/>
</dbReference>
<dbReference type="InterPro" id="IPR036412">
    <property type="entry name" value="HAD-like_sf"/>
</dbReference>
<dbReference type="InterPro" id="IPR006439">
    <property type="entry name" value="HAD-SF_hydro_IA"/>
</dbReference>
<dbReference type="InterPro" id="IPR023214">
    <property type="entry name" value="HAD_sf"/>
</dbReference>
<dbReference type="NCBIfam" id="TIGR01549">
    <property type="entry name" value="HAD-SF-IA-v1"/>
    <property type="match status" value="1"/>
</dbReference>
<dbReference type="NCBIfam" id="TIGR01509">
    <property type="entry name" value="HAD-SF-IA-v3"/>
    <property type="match status" value="1"/>
</dbReference>
<dbReference type="PANTHER" id="PTHR43885">
    <property type="entry name" value="HALOACID DEHALOGENASE-LIKE HYDROLASE"/>
    <property type="match status" value="1"/>
</dbReference>
<dbReference type="PANTHER" id="PTHR43885:SF1">
    <property type="entry name" value="SUPERFAMILY HYDROLASE, PUTATIVE (AFU_ORTHOLOGUE AFUA_4G13290)-RELATED"/>
    <property type="match status" value="1"/>
</dbReference>
<dbReference type="Pfam" id="PF00702">
    <property type="entry name" value="Hydrolase"/>
    <property type="match status" value="1"/>
</dbReference>
<dbReference type="SFLD" id="SFLDG01129">
    <property type="entry name" value="C1.5:_HAD__Beta-PGM__Phosphata"/>
    <property type="match status" value="1"/>
</dbReference>
<dbReference type="SFLD" id="SFLDS00003">
    <property type="entry name" value="Haloacid_Dehalogenase"/>
    <property type="match status" value="1"/>
</dbReference>
<dbReference type="SUPFAM" id="SSF56784">
    <property type="entry name" value="HAD-like"/>
    <property type="match status" value="1"/>
</dbReference>
<organism>
    <name type="scientific">Saccharomyces cerevisiae (strain ATCC 204508 / S288c)</name>
    <name type="common">Baker's yeast</name>
    <dbReference type="NCBI Taxonomy" id="559292"/>
    <lineage>
        <taxon>Eukaryota</taxon>
        <taxon>Fungi</taxon>
        <taxon>Dikarya</taxon>
        <taxon>Ascomycota</taxon>
        <taxon>Saccharomycotina</taxon>
        <taxon>Saccharomycetes</taxon>
        <taxon>Saccharomycetales</taxon>
        <taxon>Saccharomycetaceae</taxon>
        <taxon>Saccharomyces</taxon>
    </lineage>
</organism>